<keyword id="KW-0408">Iron</keyword>
<keyword id="KW-0479">Metal-binding</keyword>
<keyword id="KW-1185">Reference proteome</keyword>
<comment type="function">
    <text evidence="1">Involved in iron-sulfur (Fe-S) cluster assembly. May act as a regulator of Fe-S biogenesis.</text>
</comment>
<comment type="similarity">
    <text evidence="1 2">Belongs to the frataxin family.</text>
</comment>
<proteinExistence type="inferred from homology"/>
<organism>
    <name type="scientific">Pasteurella multocida (strain Pm70)</name>
    <dbReference type="NCBI Taxonomy" id="272843"/>
    <lineage>
        <taxon>Bacteria</taxon>
        <taxon>Pseudomonadati</taxon>
        <taxon>Pseudomonadota</taxon>
        <taxon>Gammaproteobacteria</taxon>
        <taxon>Pasteurellales</taxon>
        <taxon>Pasteurellaceae</taxon>
        <taxon>Pasteurella</taxon>
    </lineage>
</organism>
<reference key="1">
    <citation type="journal article" date="2001" name="Proc. Natl. Acad. Sci. U.S.A.">
        <title>Complete genomic sequence of Pasteurella multocida Pm70.</title>
        <authorList>
            <person name="May B.J."/>
            <person name="Zhang Q."/>
            <person name="Li L.L."/>
            <person name="Paustian M.L."/>
            <person name="Whittam T.S."/>
            <person name="Kapur V."/>
        </authorList>
    </citation>
    <scope>NUCLEOTIDE SEQUENCE [LARGE SCALE GENOMIC DNA]</scope>
    <source>
        <strain>Pm70</strain>
    </source>
</reference>
<evidence type="ECO:0000255" key="1">
    <source>
        <dbReference type="HAMAP-Rule" id="MF_00142"/>
    </source>
</evidence>
<evidence type="ECO:0000305" key="2"/>
<sequence>MNVTEFHQNIEQVWAKIEEQLEAQDCDVDCDTQGSVFSITFQDRSQVVINKQEPLLELWLASRVGGFHFRYQNNNWTSNDGKDFWACLEEACAAHGEIVHFS</sequence>
<feature type="chain" id="PRO_0000193947" description="Iron-sulfur cluster assembly protein CyaY">
    <location>
        <begin position="1"/>
        <end position="102"/>
    </location>
</feature>
<name>CYAY_PASMU</name>
<protein>
    <recommendedName>
        <fullName evidence="1">Iron-sulfur cluster assembly protein CyaY</fullName>
    </recommendedName>
</protein>
<dbReference type="EMBL" id="AE004439">
    <property type="protein sequence ID" value="AAK03509.1"/>
    <property type="molecule type" value="Genomic_DNA"/>
</dbReference>
<dbReference type="RefSeq" id="WP_005735315.1">
    <property type="nucleotide sequence ID" value="NC_002663.1"/>
</dbReference>
<dbReference type="SMR" id="P57943"/>
<dbReference type="STRING" id="272843.PM1425"/>
<dbReference type="EnsemblBacteria" id="AAK03509">
    <property type="protein sequence ID" value="AAK03509"/>
    <property type="gene ID" value="PM1425"/>
</dbReference>
<dbReference type="GeneID" id="77207016"/>
<dbReference type="KEGG" id="pmu:PM1425"/>
<dbReference type="HOGENOM" id="CLU_080880_3_0_6"/>
<dbReference type="OrthoDB" id="285675at2"/>
<dbReference type="Proteomes" id="UP000000809">
    <property type="component" value="Chromosome"/>
</dbReference>
<dbReference type="GO" id="GO:0005829">
    <property type="term" value="C:cytosol"/>
    <property type="evidence" value="ECO:0007669"/>
    <property type="project" value="TreeGrafter"/>
</dbReference>
<dbReference type="GO" id="GO:0008199">
    <property type="term" value="F:ferric iron binding"/>
    <property type="evidence" value="ECO:0007669"/>
    <property type="project" value="InterPro"/>
</dbReference>
<dbReference type="GO" id="GO:0008198">
    <property type="term" value="F:ferrous iron binding"/>
    <property type="evidence" value="ECO:0007669"/>
    <property type="project" value="TreeGrafter"/>
</dbReference>
<dbReference type="GO" id="GO:0016226">
    <property type="term" value="P:iron-sulfur cluster assembly"/>
    <property type="evidence" value="ECO:0007669"/>
    <property type="project" value="UniProtKB-UniRule"/>
</dbReference>
<dbReference type="CDD" id="cd00503">
    <property type="entry name" value="Frataxin"/>
    <property type="match status" value="1"/>
</dbReference>
<dbReference type="Gene3D" id="3.30.920.10">
    <property type="entry name" value="Frataxin/CyaY"/>
    <property type="match status" value="1"/>
</dbReference>
<dbReference type="HAMAP" id="MF_00142">
    <property type="entry name" value="CyaY"/>
    <property type="match status" value="1"/>
</dbReference>
<dbReference type="InterPro" id="IPR047584">
    <property type="entry name" value="CyaY"/>
</dbReference>
<dbReference type="InterPro" id="IPR002908">
    <property type="entry name" value="Frataxin/CyaY"/>
</dbReference>
<dbReference type="InterPro" id="IPR036524">
    <property type="entry name" value="Frataxin/CyaY_sf"/>
</dbReference>
<dbReference type="InterPro" id="IPR020895">
    <property type="entry name" value="Frataxin_CS"/>
</dbReference>
<dbReference type="NCBIfam" id="TIGR03421">
    <property type="entry name" value="FeS_CyaY"/>
    <property type="match status" value="1"/>
</dbReference>
<dbReference type="PANTHER" id="PTHR16821">
    <property type="entry name" value="FRATAXIN"/>
    <property type="match status" value="1"/>
</dbReference>
<dbReference type="PANTHER" id="PTHR16821:SF2">
    <property type="entry name" value="FRATAXIN, MITOCHONDRIAL"/>
    <property type="match status" value="1"/>
</dbReference>
<dbReference type="Pfam" id="PF01491">
    <property type="entry name" value="Frataxin_Cyay"/>
    <property type="match status" value="1"/>
</dbReference>
<dbReference type="SMART" id="SM01219">
    <property type="entry name" value="Frataxin_Cyay"/>
    <property type="match status" value="1"/>
</dbReference>
<dbReference type="SUPFAM" id="SSF55387">
    <property type="entry name" value="Frataxin/Nqo15-like"/>
    <property type="match status" value="1"/>
</dbReference>
<dbReference type="PROSITE" id="PS01344">
    <property type="entry name" value="FRATAXIN_1"/>
    <property type="match status" value="1"/>
</dbReference>
<dbReference type="PROSITE" id="PS50810">
    <property type="entry name" value="FRATAXIN_2"/>
    <property type="match status" value="1"/>
</dbReference>
<accession>P57943</accession>
<gene>
    <name evidence="1" type="primary">cyaY</name>
    <name type="ordered locus">PM1425</name>
</gene>